<reference key="1">
    <citation type="journal article" date="2015" name="Genome Announc.">
        <title>Complete genome sequence of Anaeromyxobacter sp. Fw109-5, an anaerobic, metal-reducing bacterium isolated from a contaminated subsurface environment.</title>
        <authorList>
            <person name="Hwang C."/>
            <person name="Copeland A."/>
            <person name="Lucas S."/>
            <person name="Lapidus A."/>
            <person name="Barry K."/>
            <person name="Glavina Del Rio T."/>
            <person name="Dalin E."/>
            <person name="Tice H."/>
            <person name="Pitluck S."/>
            <person name="Sims D."/>
            <person name="Brettin T."/>
            <person name="Bruce D.C."/>
            <person name="Detter J.C."/>
            <person name="Han C.S."/>
            <person name="Schmutz J."/>
            <person name="Larimer F.W."/>
            <person name="Land M.L."/>
            <person name="Hauser L.J."/>
            <person name="Kyrpides N."/>
            <person name="Lykidis A."/>
            <person name="Richardson P."/>
            <person name="Belieav A."/>
            <person name="Sanford R.A."/>
            <person name="Loeffler F.E."/>
            <person name="Fields M.W."/>
        </authorList>
    </citation>
    <scope>NUCLEOTIDE SEQUENCE [LARGE SCALE GENOMIC DNA]</scope>
    <source>
        <strain>Fw109-5</strain>
    </source>
</reference>
<keyword id="KW-0240">DNA-directed RNA polymerase</keyword>
<keyword id="KW-0460">Magnesium</keyword>
<keyword id="KW-0479">Metal-binding</keyword>
<keyword id="KW-0548">Nucleotidyltransferase</keyword>
<keyword id="KW-1185">Reference proteome</keyword>
<keyword id="KW-0804">Transcription</keyword>
<keyword id="KW-0808">Transferase</keyword>
<keyword id="KW-0862">Zinc</keyword>
<accession>A7HCH6</accession>
<proteinExistence type="inferred from homology"/>
<comment type="function">
    <text evidence="1">DNA-dependent RNA polymerase catalyzes the transcription of DNA into RNA using the four ribonucleoside triphosphates as substrates.</text>
</comment>
<comment type="catalytic activity">
    <reaction evidence="1">
        <text>RNA(n) + a ribonucleoside 5'-triphosphate = RNA(n+1) + diphosphate</text>
        <dbReference type="Rhea" id="RHEA:21248"/>
        <dbReference type="Rhea" id="RHEA-COMP:14527"/>
        <dbReference type="Rhea" id="RHEA-COMP:17342"/>
        <dbReference type="ChEBI" id="CHEBI:33019"/>
        <dbReference type="ChEBI" id="CHEBI:61557"/>
        <dbReference type="ChEBI" id="CHEBI:140395"/>
        <dbReference type="EC" id="2.7.7.6"/>
    </reaction>
</comment>
<comment type="cofactor">
    <cofactor evidence="1">
        <name>Mg(2+)</name>
        <dbReference type="ChEBI" id="CHEBI:18420"/>
    </cofactor>
    <text evidence="1">Binds 1 Mg(2+) ion per subunit.</text>
</comment>
<comment type="cofactor">
    <cofactor evidence="1">
        <name>Zn(2+)</name>
        <dbReference type="ChEBI" id="CHEBI:29105"/>
    </cofactor>
    <text evidence="1">Binds 2 Zn(2+) ions per subunit.</text>
</comment>
<comment type="subunit">
    <text evidence="1">The RNAP catalytic core consists of 2 alpha, 1 beta, 1 beta' and 1 omega subunit. When a sigma factor is associated with the core the holoenzyme is formed, which can initiate transcription.</text>
</comment>
<comment type="similarity">
    <text evidence="1">Belongs to the RNA polymerase beta' chain family.</text>
</comment>
<organism>
    <name type="scientific">Anaeromyxobacter sp. (strain Fw109-5)</name>
    <dbReference type="NCBI Taxonomy" id="404589"/>
    <lineage>
        <taxon>Bacteria</taxon>
        <taxon>Pseudomonadati</taxon>
        <taxon>Myxococcota</taxon>
        <taxon>Myxococcia</taxon>
        <taxon>Myxococcales</taxon>
        <taxon>Cystobacterineae</taxon>
        <taxon>Anaeromyxobacteraceae</taxon>
        <taxon>Anaeromyxobacter</taxon>
    </lineage>
</organism>
<evidence type="ECO:0000255" key="1">
    <source>
        <dbReference type="HAMAP-Rule" id="MF_01322"/>
    </source>
</evidence>
<gene>
    <name evidence="1" type="primary">rpoC</name>
    <name type="ordered locus">Anae109_2220</name>
</gene>
<dbReference type="EC" id="2.7.7.6" evidence="1"/>
<dbReference type="EMBL" id="CP000769">
    <property type="protein sequence ID" value="ABS26422.1"/>
    <property type="molecule type" value="Genomic_DNA"/>
</dbReference>
<dbReference type="RefSeq" id="WP_012097004.1">
    <property type="nucleotide sequence ID" value="NC_009675.1"/>
</dbReference>
<dbReference type="SMR" id="A7HCH6"/>
<dbReference type="STRING" id="404589.Anae109_2220"/>
<dbReference type="KEGG" id="afw:Anae109_2220"/>
<dbReference type="eggNOG" id="COG0086">
    <property type="taxonomic scope" value="Bacteria"/>
</dbReference>
<dbReference type="HOGENOM" id="CLU_000524_3_1_7"/>
<dbReference type="OrthoDB" id="9815296at2"/>
<dbReference type="Proteomes" id="UP000006382">
    <property type="component" value="Chromosome"/>
</dbReference>
<dbReference type="GO" id="GO:0000428">
    <property type="term" value="C:DNA-directed RNA polymerase complex"/>
    <property type="evidence" value="ECO:0007669"/>
    <property type="project" value="UniProtKB-KW"/>
</dbReference>
<dbReference type="GO" id="GO:0003677">
    <property type="term" value="F:DNA binding"/>
    <property type="evidence" value="ECO:0007669"/>
    <property type="project" value="UniProtKB-UniRule"/>
</dbReference>
<dbReference type="GO" id="GO:0003899">
    <property type="term" value="F:DNA-directed RNA polymerase activity"/>
    <property type="evidence" value="ECO:0007669"/>
    <property type="project" value="UniProtKB-UniRule"/>
</dbReference>
<dbReference type="GO" id="GO:0000287">
    <property type="term" value="F:magnesium ion binding"/>
    <property type="evidence" value="ECO:0007669"/>
    <property type="project" value="UniProtKB-UniRule"/>
</dbReference>
<dbReference type="GO" id="GO:0008270">
    <property type="term" value="F:zinc ion binding"/>
    <property type="evidence" value="ECO:0007669"/>
    <property type="project" value="UniProtKB-UniRule"/>
</dbReference>
<dbReference type="GO" id="GO:0006351">
    <property type="term" value="P:DNA-templated transcription"/>
    <property type="evidence" value="ECO:0007669"/>
    <property type="project" value="UniProtKB-UniRule"/>
</dbReference>
<dbReference type="CDD" id="cd02655">
    <property type="entry name" value="RNAP_beta'_C"/>
    <property type="match status" value="1"/>
</dbReference>
<dbReference type="CDD" id="cd01609">
    <property type="entry name" value="RNAP_beta'_N"/>
    <property type="match status" value="1"/>
</dbReference>
<dbReference type="FunFam" id="1.10.132.30:FF:000003">
    <property type="entry name" value="DNA-directed RNA polymerase subunit beta"/>
    <property type="match status" value="1"/>
</dbReference>
<dbReference type="FunFam" id="1.10.40.90:FF:000001">
    <property type="entry name" value="DNA-directed RNA polymerase subunit beta"/>
    <property type="match status" value="1"/>
</dbReference>
<dbReference type="Gene3D" id="1.10.132.30">
    <property type="match status" value="1"/>
</dbReference>
<dbReference type="Gene3D" id="1.10.150.390">
    <property type="match status" value="1"/>
</dbReference>
<dbReference type="Gene3D" id="1.10.1790.20">
    <property type="match status" value="1"/>
</dbReference>
<dbReference type="Gene3D" id="1.10.40.90">
    <property type="match status" value="1"/>
</dbReference>
<dbReference type="Gene3D" id="2.40.40.20">
    <property type="match status" value="1"/>
</dbReference>
<dbReference type="Gene3D" id="2.40.50.100">
    <property type="match status" value="3"/>
</dbReference>
<dbReference type="Gene3D" id="4.10.860.120">
    <property type="entry name" value="RNA polymerase II, clamp domain"/>
    <property type="match status" value="1"/>
</dbReference>
<dbReference type="Gene3D" id="1.10.274.100">
    <property type="entry name" value="RNA polymerase Rpb1, domain 3"/>
    <property type="match status" value="2"/>
</dbReference>
<dbReference type="HAMAP" id="MF_01322">
    <property type="entry name" value="RNApol_bact_RpoC"/>
    <property type="match status" value="1"/>
</dbReference>
<dbReference type="InterPro" id="IPR045867">
    <property type="entry name" value="DNA-dir_RpoC_beta_prime"/>
</dbReference>
<dbReference type="InterPro" id="IPR012754">
    <property type="entry name" value="DNA-dir_RpoC_beta_prime_bact"/>
</dbReference>
<dbReference type="InterPro" id="IPR000722">
    <property type="entry name" value="RNA_pol_asu"/>
</dbReference>
<dbReference type="InterPro" id="IPR006592">
    <property type="entry name" value="RNA_pol_N"/>
</dbReference>
<dbReference type="InterPro" id="IPR007080">
    <property type="entry name" value="RNA_pol_Rpb1_1"/>
</dbReference>
<dbReference type="InterPro" id="IPR007066">
    <property type="entry name" value="RNA_pol_Rpb1_3"/>
</dbReference>
<dbReference type="InterPro" id="IPR042102">
    <property type="entry name" value="RNA_pol_Rpb1_3_sf"/>
</dbReference>
<dbReference type="InterPro" id="IPR007083">
    <property type="entry name" value="RNA_pol_Rpb1_4"/>
</dbReference>
<dbReference type="InterPro" id="IPR007081">
    <property type="entry name" value="RNA_pol_Rpb1_5"/>
</dbReference>
<dbReference type="InterPro" id="IPR044893">
    <property type="entry name" value="RNA_pol_Rpb1_clamp_domain"/>
</dbReference>
<dbReference type="InterPro" id="IPR038120">
    <property type="entry name" value="Rpb1_funnel_sf"/>
</dbReference>
<dbReference type="NCBIfam" id="TIGR02386">
    <property type="entry name" value="rpoC_TIGR"/>
    <property type="match status" value="1"/>
</dbReference>
<dbReference type="PANTHER" id="PTHR19376">
    <property type="entry name" value="DNA-DIRECTED RNA POLYMERASE"/>
    <property type="match status" value="1"/>
</dbReference>
<dbReference type="PANTHER" id="PTHR19376:SF54">
    <property type="entry name" value="DNA-DIRECTED RNA POLYMERASE SUBUNIT BETA"/>
    <property type="match status" value="1"/>
</dbReference>
<dbReference type="Pfam" id="PF04997">
    <property type="entry name" value="RNA_pol_Rpb1_1"/>
    <property type="match status" value="1"/>
</dbReference>
<dbReference type="Pfam" id="PF00623">
    <property type="entry name" value="RNA_pol_Rpb1_2"/>
    <property type="match status" value="1"/>
</dbReference>
<dbReference type="Pfam" id="PF04983">
    <property type="entry name" value="RNA_pol_Rpb1_3"/>
    <property type="match status" value="1"/>
</dbReference>
<dbReference type="Pfam" id="PF05000">
    <property type="entry name" value="RNA_pol_Rpb1_4"/>
    <property type="match status" value="1"/>
</dbReference>
<dbReference type="Pfam" id="PF04998">
    <property type="entry name" value="RNA_pol_Rpb1_5"/>
    <property type="match status" value="1"/>
</dbReference>
<dbReference type="SMART" id="SM00663">
    <property type="entry name" value="RPOLA_N"/>
    <property type="match status" value="1"/>
</dbReference>
<dbReference type="SUPFAM" id="SSF64484">
    <property type="entry name" value="beta and beta-prime subunits of DNA dependent RNA-polymerase"/>
    <property type="match status" value="1"/>
</dbReference>
<sequence length="1395" mass="155080">MKDIFNFFEKPKDPLSFSAIRISLASPDKIRQWSHGEVKKPETINYRTFKPERDGLFCAKIFGPVKDYECNCGKYKRMKHRGVVCEKCGVEVIQSKVRRERLGHITLATPVAHIWFLKSLPSRIGNLLDITLKDLEKVLYCESYIVIDPKETTLQRGELLSEDRYHKSMEEFGEEAFLAGMGGEAVLELLKVVGPADKGHGEGVHGLADELRAQMKEATSDAKRKKIAKRLKVVEAFVQSGNKPDWMMLEVIPVIPPDLRPLVPLDGGRFATSDLNDLYRRVINRNNRLKRLQELNAPDIIIRNEKRMLQEAVDALFDNGRRGKTITGPNKRPLKSLSDMLKGKQGRFRQNLLGKRVDYSGRSVIVVGPELKLHQCGLPKIMALELFKPFIYNKLEEKGYVTTIKSAKKMVEKERPEVWDILDEVIREHPVLLNRAPTLHRLGIQAFEPVLIEGKAIQLHPLVCTAFNADFDGDQMAVHVPLSIEAQMEARVLMMSTNNILSPAHGKPIIVPSQDIVLGIYYMTRERAFARGEGKVFASEEEVRAAYDQGEVDLQAKIWVRLDGKRVETTVGRVLLYDIVPKRLPFESINKVMDKKQLQNLIDLTYRLCGEKETVLLADRVRSMGYGNATRAGISIALENMIIPRKKQELLERAMGEVDDIQTQYTEGLITIGERYNKVIDIWAQVTEEVAQEMMSQIGQETAIGTGKDGKREERKQPSFNPIYIMADSGARGSAQQIRQLAGMRGLMAKPSGEIIETPITANFREGLNVLQYFISTHGARKGLADTALKTANSGYLTRRLVDVAQDAIITEYDCGAMDGITLGALVEGGEIIEPMGERILGRVALDDIHDPFASSVLVKANEEIDESKVKLIENAGIDKVKIRSVLTCQARRGICVECYGRDLARGRKVNIGEAVGVIAAQSIGEPGTQLTMRTFHIGGAASRRAEQSTIENRNPGLVKFHNVAVAKKKDGTLIVMNRNGEIIVTDDQGRERERYGVVYGAKLLVRDGQKIETSTLLAEWDPYSMPIITEVAGHVKYGDLVDGVTISEQVDEITGLARKAVIASKDPDARPRISIKDDQGKTRKLANSEADARYMLPEGANLVVNDGDEVDAGDVIAKMPRETTKTKDITGGLPRVAELFEARKPKEHAVISEIDGVVAFGKDTKGKRKVVITPEVDGKLRPDLAKEYLIGKGKHISVHTGDRVRAGEALMDGAANPHDILRVLGEKELARWLVDEVQEVYRLQGVKINDKHIETIVRQMLRRVRIVDVGDTNFLADEQVEKFVFEEENDKVITAGGRPAQGEPLLLGITKASLSTESFISASSFQETTKVLTEAAISGKVDHLRGLKENVIMGRLIPAGTGLPHYKHLDIEVETPVDAVEEAEEALAVASGEE</sequence>
<name>RPOC_ANADF</name>
<protein>
    <recommendedName>
        <fullName evidence="1">DNA-directed RNA polymerase subunit beta'</fullName>
        <shortName evidence="1">RNAP subunit beta'</shortName>
        <ecNumber evidence="1">2.7.7.6</ecNumber>
    </recommendedName>
    <alternativeName>
        <fullName evidence="1">RNA polymerase subunit beta'</fullName>
    </alternativeName>
    <alternativeName>
        <fullName evidence="1">Transcriptase subunit beta'</fullName>
    </alternativeName>
</protein>
<feature type="chain" id="PRO_0000353287" description="DNA-directed RNA polymerase subunit beta'">
    <location>
        <begin position="1"/>
        <end position="1395"/>
    </location>
</feature>
<feature type="binding site" evidence="1">
    <location>
        <position position="70"/>
    </location>
    <ligand>
        <name>Zn(2+)</name>
        <dbReference type="ChEBI" id="CHEBI:29105"/>
        <label>1</label>
    </ligand>
</feature>
<feature type="binding site" evidence="1">
    <location>
        <position position="72"/>
    </location>
    <ligand>
        <name>Zn(2+)</name>
        <dbReference type="ChEBI" id="CHEBI:29105"/>
        <label>1</label>
    </ligand>
</feature>
<feature type="binding site" evidence="1">
    <location>
        <position position="85"/>
    </location>
    <ligand>
        <name>Zn(2+)</name>
        <dbReference type="ChEBI" id="CHEBI:29105"/>
        <label>1</label>
    </ligand>
</feature>
<feature type="binding site" evidence="1">
    <location>
        <position position="88"/>
    </location>
    <ligand>
        <name>Zn(2+)</name>
        <dbReference type="ChEBI" id="CHEBI:29105"/>
        <label>1</label>
    </ligand>
</feature>
<feature type="binding site" evidence="1">
    <location>
        <position position="470"/>
    </location>
    <ligand>
        <name>Mg(2+)</name>
        <dbReference type="ChEBI" id="CHEBI:18420"/>
    </ligand>
</feature>
<feature type="binding site" evidence="1">
    <location>
        <position position="472"/>
    </location>
    <ligand>
        <name>Mg(2+)</name>
        <dbReference type="ChEBI" id="CHEBI:18420"/>
    </ligand>
</feature>
<feature type="binding site" evidence="1">
    <location>
        <position position="474"/>
    </location>
    <ligand>
        <name>Mg(2+)</name>
        <dbReference type="ChEBI" id="CHEBI:18420"/>
    </ligand>
</feature>
<feature type="binding site" evidence="1">
    <location>
        <position position="815"/>
    </location>
    <ligand>
        <name>Zn(2+)</name>
        <dbReference type="ChEBI" id="CHEBI:29105"/>
        <label>2</label>
    </ligand>
</feature>
<feature type="binding site" evidence="1">
    <location>
        <position position="889"/>
    </location>
    <ligand>
        <name>Zn(2+)</name>
        <dbReference type="ChEBI" id="CHEBI:29105"/>
        <label>2</label>
    </ligand>
</feature>
<feature type="binding site" evidence="1">
    <location>
        <position position="896"/>
    </location>
    <ligand>
        <name>Zn(2+)</name>
        <dbReference type="ChEBI" id="CHEBI:29105"/>
        <label>2</label>
    </ligand>
</feature>
<feature type="binding site" evidence="1">
    <location>
        <position position="899"/>
    </location>
    <ligand>
        <name>Zn(2+)</name>
        <dbReference type="ChEBI" id="CHEBI:29105"/>
        <label>2</label>
    </ligand>
</feature>